<gene>
    <name evidence="1" type="primary">purC</name>
    <name type="ordered locus">Sbal223_0555</name>
</gene>
<reference key="1">
    <citation type="submission" date="2008-12" db="EMBL/GenBank/DDBJ databases">
        <title>Complete sequence of chromosome of Shewanella baltica OS223.</title>
        <authorList>
            <consortium name="US DOE Joint Genome Institute"/>
            <person name="Lucas S."/>
            <person name="Copeland A."/>
            <person name="Lapidus A."/>
            <person name="Glavina del Rio T."/>
            <person name="Dalin E."/>
            <person name="Tice H."/>
            <person name="Bruce D."/>
            <person name="Goodwin L."/>
            <person name="Pitluck S."/>
            <person name="Chertkov O."/>
            <person name="Meincke L."/>
            <person name="Brettin T."/>
            <person name="Detter J.C."/>
            <person name="Han C."/>
            <person name="Kuske C.R."/>
            <person name="Larimer F."/>
            <person name="Land M."/>
            <person name="Hauser L."/>
            <person name="Kyrpides N."/>
            <person name="Ovchinnikova G."/>
            <person name="Brettar I."/>
            <person name="Rodrigues J."/>
            <person name="Konstantinidis K."/>
            <person name="Tiedje J."/>
        </authorList>
    </citation>
    <scope>NUCLEOTIDE SEQUENCE [LARGE SCALE GENOMIC DNA]</scope>
    <source>
        <strain>OS223</strain>
    </source>
</reference>
<name>PUR7_SHEB2</name>
<comment type="catalytic activity">
    <reaction evidence="1">
        <text>5-amino-1-(5-phospho-D-ribosyl)imidazole-4-carboxylate + L-aspartate + ATP = (2S)-2-[5-amino-1-(5-phospho-beta-D-ribosyl)imidazole-4-carboxamido]succinate + ADP + phosphate + 2 H(+)</text>
        <dbReference type="Rhea" id="RHEA:22628"/>
        <dbReference type="ChEBI" id="CHEBI:15378"/>
        <dbReference type="ChEBI" id="CHEBI:29991"/>
        <dbReference type="ChEBI" id="CHEBI:30616"/>
        <dbReference type="ChEBI" id="CHEBI:43474"/>
        <dbReference type="ChEBI" id="CHEBI:58443"/>
        <dbReference type="ChEBI" id="CHEBI:77657"/>
        <dbReference type="ChEBI" id="CHEBI:456216"/>
        <dbReference type="EC" id="6.3.2.6"/>
    </reaction>
</comment>
<comment type="pathway">
    <text evidence="1">Purine metabolism; IMP biosynthesis via de novo pathway; 5-amino-1-(5-phospho-D-ribosyl)imidazole-4-carboxamide from 5-amino-1-(5-phospho-D-ribosyl)imidazole-4-carboxylate: step 1/2.</text>
</comment>
<comment type="similarity">
    <text evidence="1">Belongs to the SAICAR synthetase family.</text>
</comment>
<dbReference type="EC" id="6.3.2.6" evidence="1"/>
<dbReference type="EMBL" id="CP001252">
    <property type="protein sequence ID" value="ACK45089.1"/>
    <property type="molecule type" value="Genomic_DNA"/>
</dbReference>
<dbReference type="RefSeq" id="WP_012586692.1">
    <property type="nucleotide sequence ID" value="NC_011663.1"/>
</dbReference>
<dbReference type="SMR" id="B8E8I2"/>
<dbReference type="KEGG" id="sbp:Sbal223_0555"/>
<dbReference type="HOGENOM" id="CLU_064197_0_0_6"/>
<dbReference type="UniPathway" id="UPA00074">
    <property type="reaction ID" value="UER00131"/>
</dbReference>
<dbReference type="Proteomes" id="UP000002507">
    <property type="component" value="Chromosome"/>
</dbReference>
<dbReference type="GO" id="GO:0005737">
    <property type="term" value="C:cytoplasm"/>
    <property type="evidence" value="ECO:0007669"/>
    <property type="project" value="TreeGrafter"/>
</dbReference>
<dbReference type="GO" id="GO:0005524">
    <property type="term" value="F:ATP binding"/>
    <property type="evidence" value="ECO:0007669"/>
    <property type="project" value="UniProtKB-KW"/>
</dbReference>
<dbReference type="GO" id="GO:0004639">
    <property type="term" value="F:phosphoribosylaminoimidazolesuccinocarboxamide synthase activity"/>
    <property type="evidence" value="ECO:0007669"/>
    <property type="project" value="UniProtKB-UniRule"/>
</dbReference>
<dbReference type="GO" id="GO:0006189">
    <property type="term" value="P:'de novo' IMP biosynthetic process"/>
    <property type="evidence" value="ECO:0007669"/>
    <property type="project" value="UniProtKB-UniRule"/>
</dbReference>
<dbReference type="CDD" id="cd01414">
    <property type="entry name" value="SAICAR_synt_Sc"/>
    <property type="match status" value="1"/>
</dbReference>
<dbReference type="FunFam" id="3.30.200.20:FF:000597">
    <property type="entry name" value="Phosphoribosylaminoimidazole-succinocarboxamide synthase"/>
    <property type="match status" value="1"/>
</dbReference>
<dbReference type="FunFam" id="3.30.470.20:FF:000067">
    <property type="entry name" value="Phosphoribosylaminoimidazole-succinocarboxamide synthase"/>
    <property type="match status" value="1"/>
</dbReference>
<dbReference type="Gene3D" id="3.30.470.20">
    <property type="entry name" value="ATP-grasp fold, B domain"/>
    <property type="match status" value="1"/>
</dbReference>
<dbReference type="Gene3D" id="3.30.200.20">
    <property type="entry name" value="Phosphorylase Kinase, domain 1"/>
    <property type="match status" value="1"/>
</dbReference>
<dbReference type="HAMAP" id="MF_00137">
    <property type="entry name" value="SAICAR_synth"/>
    <property type="match status" value="1"/>
</dbReference>
<dbReference type="InterPro" id="IPR028923">
    <property type="entry name" value="SAICAR_synt/ADE2_N"/>
</dbReference>
<dbReference type="InterPro" id="IPR014106">
    <property type="entry name" value="SAICAR_synthase_Vibrio-typ"/>
</dbReference>
<dbReference type="InterPro" id="IPR018236">
    <property type="entry name" value="SAICAR_synthetase_CS"/>
</dbReference>
<dbReference type="NCBIfam" id="NF010567">
    <property type="entry name" value="PRK13960.1"/>
    <property type="match status" value="1"/>
</dbReference>
<dbReference type="NCBIfam" id="TIGR02735">
    <property type="entry name" value="purC_vibrio"/>
    <property type="match status" value="1"/>
</dbReference>
<dbReference type="PANTHER" id="PTHR43700">
    <property type="entry name" value="PHOSPHORIBOSYLAMINOIMIDAZOLE-SUCCINOCARBOXAMIDE SYNTHASE"/>
    <property type="match status" value="1"/>
</dbReference>
<dbReference type="PANTHER" id="PTHR43700:SF1">
    <property type="entry name" value="PHOSPHORIBOSYLAMINOIMIDAZOLE-SUCCINOCARBOXAMIDE SYNTHASE"/>
    <property type="match status" value="1"/>
</dbReference>
<dbReference type="Pfam" id="PF01259">
    <property type="entry name" value="SAICAR_synt"/>
    <property type="match status" value="1"/>
</dbReference>
<dbReference type="SUPFAM" id="SSF56104">
    <property type="entry name" value="SAICAR synthase-like"/>
    <property type="match status" value="1"/>
</dbReference>
<dbReference type="PROSITE" id="PS01057">
    <property type="entry name" value="SAICAR_SYNTHETASE_1"/>
    <property type="match status" value="1"/>
</dbReference>
<sequence length="367" mass="40814">MSLADSVLAINNDLPIRTDSPVHSGKVRSVYWLTDADSRRLITTKGYNVPEDTPLAIMVISDRISAFDCIFHGEGGLKGIPGKGAALNAISNHWFKLFAENGLADSHILDIPHPFVWIVQKARPIKVEAICRQYITGSMWRAYSKGERVFCGITLPEGLEKDQKLPELLITPSTKGILTGIPGVPAQDDVNISRSDIEANYQAFGFEKLADIDLYEKLLKDGFKVISKALADIDQVFVDTKFEFGYVTDKDGNSKLIYMDEVGTPDSSRIWDGAAYRDGKILENSKEGFRQFLLNHFPDPDVLLNKDRMPEREALARDNDLPLEAMMQVSRTYTGVAEKVTGAPIPLPANPKADIIKILKDEYDLIV</sequence>
<accession>B8E8I2</accession>
<evidence type="ECO:0000255" key="1">
    <source>
        <dbReference type="HAMAP-Rule" id="MF_00137"/>
    </source>
</evidence>
<feature type="chain" id="PRO_1000122929" description="Phosphoribosylaminoimidazole-succinocarboxamide synthase">
    <location>
        <begin position="1"/>
        <end position="367"/>
    </location>
</feature>
<keyword id="KW-0067">ATP-binding</keyword>
<keyword id="KW-0436">Ligase</keyword>
<keyword id="KW-0547">Nucleotide-binding</keyword>
<keyword id="KW-0658">Purine biosynthesis</keyword>
<proteinExistence type="inferred from homology"/>
<organism>
    <name type="scientific">Shewanella baltica (strain OS223)</name>
    <dbReference type="NCBI Taxonomy" id="407976"/>
    <lineage>
        <taxon>Bacteria</taxon>
        <taxon>Pseudomonadati</taxon>
        <taxon>Pseudomonadota</taxon>
        <taxon>Gammaproteobacteria</taxon>
        <taxon>Alteromonadales</taxon>
        <taxon>Shewanellaceae</taxon>
        <taxon>Shewanella</taxon>
    </lineage>
</organism>
<protein>
    <recommendedName>
        <fullName evidence="1">Phosphoribosylaminoimidazole-succinocarboxamide synthase</fullName>
        <ecNumber evidence="1">6.3.2.6</ecNumber>
    </recommendedName>
    <alternativeName>
        <fullName evidence="1">SAICAR synthetase</fullName>
    </alternativeName>
</protein>